<sequence>MSVTIVSKRYASALFDIVLASSAVDETEKELNEIKKVLKADQELNDFLVHPKITADKKKHLIAEAFKGVSTHVLHTMYLLIDRGRTNIFSEMTSEFVKLANRTKQIDDAIVYSVKPLSGAEIQSLSEVFAKKAGVTSLRVENVIDKDLIGGVKIRIGNRIYDGSVSGKLSRIERQLAGENR</sequence>
<evidence type="ECO:0000255" key="1">
    <source>
        <dbReference type="HAMAP-Rule" id="MF_01416"/>
    </source>
</evidence>
<proteinExistence type="inferred from homology"/>
<feature type="chain" id="PRO_0000370893" description="ATP synthase subunit delta">
    <location>
        <begin position="1"/>
        <end position="181"/>
    </location>
</feature>
<reference key="1">
    <citation type="journal article" date="2007" name="PLoS ONE">
        <title>Paradoxical DNA repair and peroxide resistance gene conservation in Bacillus pumilus SAFR-032.</title>
        <authorList>
            <person name="Gioia J."/>
            <person name="Yerrapragada S."/>
            <person name="Qin X."/>
            <person name="Jiang H."/>
            <person name="Igboeli O.C."/>
            <person name="Muzny D."/>
            <person name="Dugan-Rocha S."/>
            <person name="Ding Y."/>
            <person name="Hawes A."/>
            <person name="Liu W."/>
            <person name="Perez L."/>
            <person name="Kovar C."/>
            <person name="Dinh H."/>
            <person name="Lee S."/>
            <person name="Nazareth L."/>
            <person name="Blyth P."/>
            <person name="Holder M."/>
            <person name="Buhay C."/>
            <person name="Tirumalai M.R."/>
            <person name="Liu Y."/>
            <person name="Dasgupta I."/>
            <person name="Bokhetache L."/>
            <person name="Fujita M."/>
            <person name="Karouia F."/>
            <person name="Eswara Moorthy P."/>
            <person name="Siefert J."/>
            <person name="Uzman A."/>
            <person name="Buzumbo P."/>
            <person name="Verma A."/>
            <person name="Zwiya H."/>
            <person name="McWilliams B.D."/>
            <person name="Olowu A."/>
            <person name="Clinkenbeard K.D."/>
            <person name="Newcombe D."/>
            <person name="Golebiewski L."/>
            <person name="Petrosino J.F."/>
            <person name="Nicholson W.L."/>
            <person name="Fox G.E."/>
            <person name="Venkateswaran K."/>
            <person name="Highlander S.K."/>
            <person name="Weinstock G.M."/>
        </authorList>
    </citation>
    <scope>NUCLEOTIDE SEQUENCE [LARGE SCALE GENOMIC DNA]</scope>
    <source>
        <strain>SAFR-032</strain>
    </source>
</reference>
<gene>
    <name evidence="1" type="primary">atpH</name>
    <name type="ordered locus">BPUM_3329</name>
</gene>
<protein>
    <recommendedName>
        <fullName evidence="1">ATP synthase subunit delta</fullName>
    </recommendedName>
    <alternativeName>
        <fullName evidence="1">ATP synthase F(1) sector subunit delta</fullName>
    </alternativeName>
    <alternativeName>
        <fullName evidence="1">F-type ATPase subunit delta</fullName>
        <shortName evidence="1">F-ATPase subunit delta</shortName>
    </alternativeName>
</protein>
<accession>A8FIB5</accession>
<dbReference type="EMBL" id="CP000813">
    <property type="protein sequence ID" value="ABV63982.1"/>
    <property type="molecule type" value="Genomic_DNA"/>
</dbReference>
<dbReference type="RefSeq" id="WP_012011549.1">
    <property type="nucleotide sequence ID" value="NZ_VEIS01000002.1"/>
</dbReference>
<dbReference type="SMR" id="A8FIB5"/>
<dbReference type="STRING" id="315750.BPUM_3329"/>
<dbReference type="GeneID" id="5622619"/>
<dbReference type="KEGG" id="bpu:BPUM_3329"/>
<dbReference type="eggNOG" id="COG0712">
    <property type="taxonomic scope" value="Bacteria"/>
</dbReference>
<dbReference type="HOGENOM" id="CLU_085114_4_1_9"/>
<dbReference type="OrthoDB" id="9802471at2"/>
<dbReference type="Proteomes" id="UP000001355">
    <property type="component" value="Chromosome"/>
</dbReference>
<dbReference type="GO" id="GO:0005886">
    <property type="term" value="C:plasma membrane"/>
    <property type="evidence" value="ECO:0007669"/>
    <property type="project" value="UniProtKB-SubCell"/>
</dbReference>
<dbReference type="GO" id="GO:0045259">
    <property type="term" value="C:proton-transporting ATP synthase complex"/>
    <property type="evidence" value="ECO:0007669"/>
    <property type="project" value="UniProtKB-KW"/>
</dbReference>
<dbReference type="GO" id="GO:0046933">
    <property type="term" value="F:proton-transporting ATP synthase activity, rotational mechanism"/>
    <property type="evidence" value="ECO:0007669"/>
    <property type="project" value="UniProtKB-UniRule"/>
</dbReference>
<dbReference type="Gene3D" id="1.10.520.20">
    <property type="entry name" value="N-terminal domain of the delta subunit of the F1F0-ATP synthase"/>
    <property type="match status" value="1"/>
</dbReference>
<dbReference type="HAMAP" id="MF_01416">
    <property type="entry name" value="ATP_synth_delta_bact"/>
    <property type="match status" value="1"/>
</dbReference>
<dbReference type="InterPro" id="IPR026015">
    <property type="entry name" value="ATP_synth_OSCP/delta_N_sf"/>
</dbReference>
<dbReference type="InterPro" id="IPR020781">
    <property type="entry name" value="ATPase_OSCP/d_CS"/>
</dbReference>
<dbReference type="InterPro" id="IPR000711">
    <property type="entry name" value="ATPase_OSCP/dsu"/>
</dbReference>
<dbReference type="NCBIfam" id="TIGR01145">
    <property type="entry name" value="ATP_synt_delta"/>
    <property type="match status" value="1"/>
</dbReference>
<dbReference type="NCBIfam" id="NF004403">
    <property type="entry name" value="PRK05758.2-4"/>
    <property type="match status" value="1"/>
</dbReference>
<dbReference type="PANTHER" id="PTHR11910">
    <property type="entry name" value="ATP SYNTHASE DELTA CHAIN"/>
    <property type="match status" value="1"/>
</dbReference>
<dbReference type="Pfam" id="PF00213">
    <property type="entry name" value="OSCP"/>
    <property type="match status" value="1"/>
</dbReference>
<dbReference type="PRINTS" id="PR00125">
    <property type="entry name" value="ATPASEDELTA"/>
</dbReference>
<dbReference type="SUPFAM" id="SSF47928">
    <property type="entry name" value="N-terminal domain of the delta subunit of the F1F0-ATP synthase"/>
    <property type="match status" value="1"/>
</dbReference>
<dbReference type="PROSITE" id="PS00389">
    <property type="entry name" value="ATPASE_DELTA"/>
    <property type="match status" value="1"/>
</dbReference>
<organism>
    <name type="scientific">Bacillus pumilus (strain SAFR-032)</name>
    <dbReference type="NCBI Taxonomy" id="315750"/>
    <lineage>
        <taxon>Bacteria</taxon>
        <taxon>Bacillati</taxon>
        <taxon>Bacillota</taxon>
        <taxon>Bacilli</taxon>
        <taxon>Bacillales</taxon>
        <taxon>Bacillaceae</taxon>
        <taxon>Bacillus</taxon>
    </lineage>
</organism>
<comment type="function">
    <text evidence="1">F(1)F(0) ATP synthase produces ATP from ADP in the presence of a proton or sodium gradient. F-type ATPases consist of two structural domains, F(1) containing the extramembraneous catalytic core and F(0) containing the membrane proton channel, linked together by a central stalk and a peripheral stalk. During catalysis, ATP synthesis in the catalytic domain of F(1) is coupled via a rotary mechanism of the central stalk subunits to proton translocation.</text>
</comment>
<comment type="function">
    <text evidence="1">This protein is part of the stalk that links CF(0) to CF(1). It either transmits conformational changes from CF(0) to CF(1) or is implicated in proton conduction.</text>
</comment>
<comment type="subunit">
    <text evidence="1">F-type ATPases have 2 components, F(1) - the catalytic core - and F(0) - the membrane proton channel. F(1) has five subunits: alpha(3), beta(3), gamma(1), delta(1), epsilon(1). F(0) has three main subunits: a(1), b(2) and c(10-14). The alpha and beta chains form an alternating ring which encloses part of the gamma chain. F(1) is attached to F(0) by a central stalk formed by the gamma and epsilon chains, while a peripheral stalk is formed by the delta and b chains.</text>
</comment>
<comment type="subcellular location">
    <subcellularLocation>
        <location evidence="1">Cell membrane</location>
        <topology evidence="1">Peripheral membrane protein</topology>
    </subcellularLocation>
</comment>
<comment type="similarity">
    <text evidence="1">Belongs to the ATPase delta chain family.</text>
</comment>
<name>ATPD_BACP2</name>
<keyword id="KW-0066">ATP synthesis</keyword>
<keyword id="KW-1003">Cell membrane</keyword>
<keyword id="KW-0139">CF(1)</keyword>
<keyword id="KW-0375">Hydrogen ion transport</keyword>
<keyword id="KW-0406">Ion transport</keyword>
<keyword id="KW-0472">Membrane</keyword>
<keyword id="KW-0813">Transport</keyword>